<proteinExistence type="uncertain"/>
<dbReference type="EMBL" id="Z73081">
    <property type="status" value="NOT_ANNOTATED_CDS"/>
    <property type="molecule type" value="Genomic_DNA"/>
</dbReference>
<dbReference type="EMBL" id="AF479953">
    <property type="protein sequence ID" value="AAL79266.1"/>
    <property type="molecule type" value="Genomic_DNA"/>
</dbReference>
<dbReference type="EnsemblFungi" id="YER190C-A_mRNA">
    <property type="protein sequence ID" value="YER190C-A"/>
    <property type="gene ID" value="YER190C-A"/>
</dbReference>
<dbReference type="EnsemblFungi" id="YGR296C-A_mRNA">
    <property type="protein sequence ID" value="YGR296C-A"/>
    <property type="gene ID" value="YGR296C-A"/>
</dbReference>
<dbReference type="EnsemblFungi" id="YML133W-A_mRNA">
    <property type="protein sequence ID" value="YML133W-A"/>
    <property type="gene ID" value="YML133W-A"/>
</dbReference>
<dbReference type="EnsemblFungi" id="YNL339W-A_mRNA">
    <property type="protein sequence ID" value="YNL339W-A"/>
    <property type="gene ID" value="YNL339W-A"/>
</dbReference>
<dbReference type="EnsemblFungi" id="YPL283W-A_mRNA">
    <property type="protein sequence ID" value="YPL283W-A"/>
    <property type="gene ID" value="YPL283W-A"/>
</dbReference>
<dbReference type="AGR" id="SGD:S000028642"/>
<dbReference type="SGD" id="S000028642">
    <property type="gene designation" value="YGR296C-A"/>
</dbReference>
<dbReference type="HOGENOM" id="CLU_106419_0_0_1"/>
<dbReference type="OMA" id="CAHGATM"/>
<dbReference type="GO" id="GO:0016020">
    <property type="term" value="C:membrane"/>
    <property type="evidence" value="ECO:0007669"/>
    <property type="project" value="UniProtKB-SubCell"/>
</dbReference>
<organism>
    <name type="scientific">Saccharomyces cerevisiae (strain ATCC 204508 / S288c)</name>
    <name type="common">Baker's yeast</name>
    <dbReference type="NCBI Taxonomy" id="559292"/>
    <lineage>
        <taxon>Eukaryota</taxon>
        <taxon>Fungi</taxon>
        <taxon>Dikarya</taxon>
        <taxon>Ascomycota</taxon>
        <taxon>Saccharomycotina</taxon>
        <taxon>Saccharomycetes</taxon>
        <taxon>Saccharomycetales</taxon>
        <taxon>Saccharomycetaceae</taxon>
        <taxon>Saccharomyces</taxon>
    </lineage>
</organism>
<feature type="signal peptide" evidence="1">
    <location>
        <begin position="1"/>
        <end position="17"/>
    </location>
</feature>
<feature type="chain" id="PRO_0000406005" description="Putative uncharacterized protein YGR296C-A">
    <location>
        <begin position="18"/>
        <end position="191"/>
    </location>
</feature>
<feature type="transmembrane region" description="Helical" evidence="1">
    <location>
        <begin position="168"/>
        <end position="188"/>
    </location>
</feature>
<feature type="region of interest" description="Disordered" evidence="2">
    <location>
        <begin position="82"/>
        <end position="148"/>
    </location>
</feature>
<keyword id="KW-0472">Membrane</keyword>
<keyword id="KW-0732">Signal</keyword>
<keyword id="KW-0812">Transmembrane</keyword>
<keyword id="KW-1133">Transmembrane helix</keyword>
<protein>
    <recommendedName>
        <fullName>Putative uncharacterized protein YGR296C-A</fullName>
    </recommendedName>
</protein>
<accession>P0CL28</accession>
<accession>Q8TFA6</accession>
<evidence type="ECO:0000255" key="1"/>
<evidence type="ECO:0000256" key="2">
    <source>
        <dbReference type="SAM" id="MobiDB-lite"/>
    </source>
</evidence>
<evidence type="ECO:0000305" key="3"/>
<evidence type="ECO:0000305" key="4">
    <source>
    </source>
</evidence>
<reference key="1">
    <citation type="journal article" date="1997" name="Nature">
        <title>The nucleotide sequence of Saccharomyces cerevisiae chromosome VII.</title>
        <authorList>
            <person name="Tettelin H."/>
            <person name="Agostoni-Carbone M.L."/>
            <person name="Albermann K."/>
            <person name="Albers M."/>
            <person name="Arroyo J."/>
            <person name="Backes U."/>
            <person name="Barreiros T."/>
            <person name="Bertani I."/>
            <person name="Bjourson A.J."/>
            <person name="Brueckner M."/>
            <person name="Bruschi C.V."/>
            <person name="Carignani G."/>
            <person name="Castagnoli L."/>
            <person name="Cerdan E."/>
            <person name="Clemente M.L."/>
            <person name="Coblenz A."/>
            <person name="Coglievina M."/>
            <person name="Coissac E."/>
            <person name="Defoor E."/>
            <person name="Del Bino S."/>
            <person name="Delius H."/>
            <person name="Delneri D."/>
            <person name="de Wergifosse P."/>
            <person name="Dujon B."/>
            <person name="Durand P."/>
            <person name="Entian K.-D."/>
            <person name="Eraso P."/>
            <person name="Escribano V."/>
            <person name="Fabiani L."/>
            <person name="Fartmann B."/>
            <person name="Feroli F."/>
            <person name="Feuermann M."/>
            <person name="Frontali L."/>
            <person name="Garcia-Gonzalez M."/>
            <person name="Garcia-Saez M.I."/>
            <person name="Goffeau A."/>
            <person name="Guerreiro P."/>
            <person name="Hani J."/>
            <person name="Hansen M."/>
            <person name="Hebling U."/>
            <person name="Hernandez K."/>
            <person name="Heumann K."/>
            <person name="Hilger F."/>
            <person name="Hofmann B."/>
            <person name="Indge K.J."/>
            <person name="James C.M."/>
            <person name="Klima R."/>
            <person name="Koetter P."/>
            <person name="Kramer B."/>
            <person name="Kramer W."/>
            <person name="Lauquin G."/>
            <person name="Leuther H."/>
            <person name="Louis E.J."/>
            <person name="Maillier E."/>
            <person name="Marconi A."/>
            <person name="Martegani E."/>
            <person name="Mazon M.J."/>
            <person name="Mazzoni C."/>
            <person name="McReynolds A.D.K."/>
            <person name="Melchioretto P."/>
            <person name="Mewes H.-W."/>
            <person name="Minenkova O."/>
            <person name="Mueller-Auer S."/>
            <person name="Nawrocki A."/>
            <person name="Netter P."/>
            <person name="Neu R."/>
            <person name="Nombela C."/>
            <person name="Oliver S.G."/>
            <person name="Panzeri L."/>
            <person name="Paoluzi S."/>
            <person name="Plevani P."/>
            <person name="Portetelle D."/>
            <person name="Portillo F."/>
            <person name="Potier S."/>
            <person name="Purnelle B."/>
            <person name="Rieger M."/>
            <person name="Riles L."/>
            <person name="Rinaldi T."/>
            <person name="Robben J."/>
            <person name="Rodrigues-Pousada C."/>
            <person name="Rodriguez-Belmonte E."/>
            <person name="Rodriguez-Torres A.M."/>
            <person name="Rose M."/>
            <person name="Ruzzi M."/>
            <person name="Saliola M."/>
            <person name="Sanchez-Perez M."/>
            <person name="Schaefer B."/>
            <person name="Schaefer M."/>
            <person name="Scharfe M."/>
            <person name="Schmidheini T."/>
            <person name="Schreer A."/>
            <person name="Skala J."/>
            <person name="Souciet J.-L."/>
            <person name="Steensma H.Y."/>
            <person name="Talla E."/>
            <person name="Thierry A."/>
            <person name="Vandenbol M."/>
            <person name="van der Aart Q.J.M."/>
            <person name="Van Dyck L."/>
            <person name="Vanoni M."/>
            <person name="Verhasselt P."/>
            <person name="Voet M."/>
            <person name="Volckaert G."/>
            <person name="Wambutt R."/>
            <person name="Watson M.D."/>
            <person name="Weber N."/>
            <person name="Wedler E."/>
            <person name="Wedler H."/>
            <person name="Wipfli P."/>
            <person name="Wolf K."/>
            <person name="Wright L.F."/>
            <person name="Zaccaria P."/>
            <person name="Zimmermann M."/>
            <person name="Zollner A."/>
            <person name="Kleine K."/>
        </authorList>
    </citation>
    <scope>NUCLEOTIDE SEQUENCE [LARGE SCALE GENOMIC DNA]</scope>
    <source>
        <strain>ATCC 204508 / S288c</strain>
    </source>
</reference>
<reference key="2">
    <citation type="journal article" date="2014" name="G3 (Bethesda)">
        <title>The reference genome sequence of Saccharomyces cerevisiae: Then and now.</title>
        <authorList>
            <person name="Engel S.R."/>
            <person name="Dietrich F.S."/>
            <person name="Fisk D.G."/>
            <person name="Binkley G."/>
            <person name="Balakrishnan R."/>
            <person name="Costanzo M.C."/>
            <person name="Dwight S.S."/>
            <person name="Hitz B.C."/>
            <person name="Karra K."/>
            <person name="Nash R.S."/>
            <person name="Weng S."/>
            <person name="Wong E.D."/>
            <person name="Lloyd P."/>
            <person name="Skrzypek M.S."/>
            <person name="Miyasato S.R."/>
            <person name="Simison M."/>
            <person name="Cherry J.M."/>
        </authorList>
    </citation>
    <scope>GENOME REANNOTATION</scope>
    <source>
        <strain>ATCC 204508 / S288c</strain>
    </source>
</reference>
<reference key="3">
    <citation type="journal article" date="2002" name="Nat. Biotechnol.">
        <title>An integrated approach for finding overlooked genes in yeast.</title>
        <authorList>
            <person name="Kumar A."/>
            <person name="Harrison P.M."/>
            <person name="Cheung K.-H."/>
            <person name="Lan N."/>
            <person name="Echols N."/>
            <person name="Bertone P."/>
            <person name="Miller P."/>
            <person name="Gerstein M.B."/>
            <person name="Snyder M."/>
        </authorList>
    </citation>
    <scope>NUCLEOTIDE SEQUENCE [GENOMIC DNA]</scope>
</reference>
<comment type="subcellular location">
    <subcellularLocation>
        <location evidence="3">Membrane</location>
        <topology evidence="3">Single-pass membrane protein</topology>
    </subcellularLocation>
</comment>
<comment type="miscellaneous">
    <text evidence="3">Completely overlaps YRF1-3.</text>
</comment>
<comment type="caution">
    <text evidence="4">Product of a dubious gene prediction unlikely to encode a functional protein. Because of that it is not part of the S.cerevisiae S288c complete/reference proteome set.</text>
</comment>
<sequence>MESIILSIAIFIGVLLGTSVGTFSGSGISAGVGASSGSGISAGVGASSGSSTSVGVGTFGGSSTSVGVGTFGGSSTSVGVGTFSGSRTSPDVDAGSGSSTSPDVGAGSGSSISAGVGTFSGSRTSPDVDAGSGSSTSPDVGAGSGSSISAGVGSRIGTGISTTMNARVAVLITAAILSAPVTAIALLEARR</sequence>
<gene>
    <name type="ordered locus">YGR296C-A</name>
</gene>
<name>YGR96_YEAST</name>